<gene>
    <name evidence="1" type="primary">secA</name>
    <name type="ordered locus">EFER_0120</name>
</gene>
<protein>
    <recommendedName>
        <fullName evidence="1">Protein translocase subunit SecA</fullName>
        <ecNumber evidence="1">7.4.2.8</ecNumber>
    </recommendedName>
</protein>
<dbReference type="EC" id="7.4.2.8" evidence="1"/>
<dbReference type="EMBL" id="CU928158">
    <property type="protein sequence ID" value="CAQ87703.1"/>
    <property type="molecule type" value="Genomic_DNA"/>
</dbReference>
<dbReference type="RefSeq" id="WP_000905746.1">
    <property type="nucleotide sequence ID" value="NC_011740.1"/>
</dbReference>
<dbReference type="SMR" id="B7LWG4"/>
<dbReference type="GeneID" id="75058794"/>
<dbReference type="KEGG" id="efe:EFER_0120"/>
<dbReference type="HOGENOM" id="CLU_005314_3_0_6"/>
<dbReference type="OrthoDB" id="9805579at2"/>
<dbReference type="Proteomes" id="UP000000745">
    <property type="component" value="Chromosome"/>
</dbReference>
<dbReference type="GO" id="GO:0031522">
    <property type="term" value="C:cell envelope Sec protein transport complex"/>
    <property type="evidence" value="ECO:0007669"/>
    <property type="project" value="TreeGrafter"/>
</dbReference>
<dbReference type="GO" id="GO:0005829">
    <property type="term" value="C:cytosol"/>
    <property type="evidence" value="ECO:0007669"/>
    <property type="project" value="TreeGrafter"/>
</dbReference>
<dbReference type="GO" id="GO:0005886">
    <property type="term" value="C:plasma membrane"/>
    <property type="evidence" value="ECO:0007669"/>
    <property type="project" value="UniProtKB-SubCell"/>
</dbReference>
<dbReference type="GO" id="GO:0005524">
    <property type="term" value="F:ATP binding"/>
    <property type="evidence" value="ECO:0007669"/>
    <property type="project" value="UniProtKB-UniRule"/>
</dbReference>
<dbReference type="GO" id="GO:0046872">
    <property type="term" value="F:metal ion binding"/>
    <property type="evidence" value="ECO:0007669"/>
    <property type="project" value="UniProtKB-KW"/>
</dbReference>
<dbReference type="GO" id="GO:0008564">
    <property type="term" value="F:protein-exporting ATPase activity"/>
    <property type="evidence" value="ECO:0007669"/>
    <property type="project" value="UniProtKB-EC"/>
</dbReference>
<dbReference type="GO" id="GO:0065002">
    <property type="term" value="P:intracellular protein transmembrane transport"/>
    <property type="evidence" value="ECO:0007669"/>
    <property type="project" value="UniProtKB-UniRule"/>
</dbReference>
<dbReference type="GO" id="GO:0017038">
    <property type="term" value="P:protein import"/>
    <property type="evidence" value="ECO:0007669"/>
    <property type="project" value="InterPro"/>
</dbReference>
<dbReference type="GO" id="GO:0006605">
    <property type="term" value="P:protein targeting"/>
    <property type="evidence" value="ECO:0007669"/>
    <property type="project" value="UniProtKB-UniRule"/>
</dbReference>
<dbReference type="GO" id="GO:0043952">
    <property type="term" value="P:protein transport by the Sec complex"/>
    <property type="evidence" value="ECO:0007669"/>
    <property type="project" value="TreeGrafter"/>
</dbReference>
<dbReference type="CDD" id="cd17928">
    <property type="entry name" value="DEXDc_SecA"/>
    <property type="match status" value="1"/>
</dbReference>
<dbReference type="CDD" id="cd18803">
    <property type="entry name" value="SF2_C_secA"/>
    <property type="match status" value="1"/>
</dbReference>
<dbReference type="FunFam" id="1.10.3060.10:FF:000001">
    <property type="entry name" value="Preprotein translocase subunit SecA"/>
    <property type="match status" value="1"/>
</dbReference>
<dbReference type="FunFam" id="3.40.50.300:FF:000081">
    <property type="entry name" value="Preprotein translocase subunit SecA"/>
    <property type="match status" value="1"/>
</dbReference>
<dbReference type="FunFam" id="3.40.50.300:FF:000113">
    <property type="entry name" value="Preprotein translocase subunit SecA"/>
    <property type="match status" value="1"/>
</dbReference>
<dbReference type="FunFam" id="3.90.1440.10:FF:000001">
    <property type="entry name" value="Preprotein translocase subunit SecA"/>
    <property type="match status" value="1"/>
</dbReference>
<dbReference type="Gene3D" id="1.10.3060.10">
    <property type="entry name" value="Helical scaffold and wing domains of SecA"/>
    <property type="match status" value="1"/>
</dbReference>
<dbReference type="Gene3D" id="3.40.50.300">
    <property type="entry name" value="P-loop containing nucleotide triphosphate hydrolases"/>
    <property type="match status" value="2"/>
</dbReference>
<dbReference type="Gene3D" id="3.90.1440.10">
    <property type="entry name" value="SecA, preprotein cross-linking domain"/>
    <property type="match status" value="1"/>
</dbReference>
<dbReference type="HAMAP" id="MF_01382">
    <property type="entry name" value="SecA"/>
    <property type="match status" value="1"/>
</dbReference>
<dbReference type="InterPro" id="IPR014001">
    <property type="entry name" value="Helicase_ATP-bd"/>
</dbReference>
<dbReference type="InterPro" id="IPR027417">
    <property type="entry name" value="P-loop_NTPase"/>
</dbReference>
<dbReference type="InterPro" id="IPR004027">
    <property type="entry name" value="SEC_C_motif"/>
</dbReference>
<dbReference type="InterPro" id="IPR000185">
    <property type="entry name" value="SecA"/>
</dbReference>
<dbReference type="InterPro" id="IPR020937">
    <property type="entry name" value="SecA_CS"/>
</dbReference>
<dbReference type="InterPro" id="IPR011115">
    <property type="entry name" value="SecA_DEAD"/>
</dbReference>
<dbReference type="InterPro" id="IPR014018">
    <property type="entry name" value="SecA_motor_DEAD"/>
</dbReference>
<dbReference type="InterPro" id="IPR011130">
    <property type="entry name" value="SecA_preprotein_X-link_dom"/>
</dbReference>
<dbReference type="InterPro" id="IPR044722">
    <property type="entry name" value="SecA_SF2_C"/>
</dbReference>
<dbReference type="InterPro" id="IPR011116">
    <property type="entry name" value="SecA_Wing/Scaffold"/>
</dbReference>
<dbReference type="InterPro" id="IPR036266">
    <property type="entry name" value="SecA_Wing/Scaffold_sf"/>
</dbReference>
<dbReference type="InterPro" id="IPR036670">
    <property type="entry name" value="SecA_X-link_sf"/>
</dbReference>
<dbReference type="NCBIfam" id="NF009538">
    <property type="entry name" value="PRK12904.1"/>
    <property type="match status" value="1"/>
</dbReference>
<dbReference type="NCBIfam" id="TIGR00963">
    <property type="entry name" value="secA"/>
    <property type="match status" value="1"/>
</dbReference>
<dbReference type="PANTHER" id="PTHR30612:SF0">
    <property type="entry name" value="CHLOROPLAST PROTEIN-TRANSPORTING ATPASE"/>
    <property type="match status" value="1"/>
</dbReference>
<dbReference type="PANTHER" id="PTHR30612">
    <property type="entry name" value="SECA INNER MEMBRANE COMPONENT OF SEC PROTEIN SECRETION SYSTEM"/>
    <property type="match status" value="1"/>
</dbReference>
<dbReference type="Pfam" id="PF21090">
    <property type="entry name" value="P-loop_SecA"/>
    <property type="match status" value="1"/>
</dbReference>
<dbReference type="Pfam" id="PF02810">
    <property type="entry name" value="SEC-C"/>
    <property type="match status" value="1"/>
</dbReference>
<dbReference type="Pfam" id="PF07517">
    <property type="entry name" value="SecA_DEAD"/>
    <property type="match status" value="1"/>
</dbReference>
<dbReference type="Pfam" id="PF01043">
    <property type="entry name" value="SecA_PP_bind"/>
    <property type="match status" value="1"/>
</dbReference>
<dbReference type="Pfam" id="PF07516">
    <property type="entry name" value="SecA_SW"/>
    <property type="match status" value="1"/>
</dbReference>
<dbReference type="PRINTS" id="PR00906">
    <property type="entry name" value="SECA"/>
</dbReference>
<dbReference type="SMART" id="SM00957">
    <property type="entry name" value="SecA_DEAD"/>
    <property type="match status" value="1"/>
</dbReference>
<dbReference type="SMART" id="SM00958">
    <property type="entry name" value="SecA_PP_bind"/>
    <property type="match status" value="1"/>
</dbReference>
<dbReference type="SUPFAM" id="SSF81886">
    <property type="entry name" value="Helical scaffold and wing domains of SecA"/>
    <property type="match status" value="1"/>
</dbReference>
<dbReference type="SUPFAM" id="SSF52540">
    <property type="entry name" value="P-loop containing nucleoside triphosphate hydrolases"/>
    <property type="match status" value="2"/>
</dbReference>
<dbReference type="SUPFAM" id="SSF81767">
    <property type="entry name" value="Pre-protein crosslinking domain of SecA"/>
    <property type="match status" value="1"/>
</dbReference>
<dbReference type="PROSITE" id="PS01312">
    <property type="entry name" value="SECA"/>
    <property type="match status" value="1"/>
</dbReference>
<dbReference type="PROSITE" id="PS51196">
    <property type="entry name" value="SECA_MOTOR_DEAD"/>
    <property type="match status" value="1"/>
</dbReference>
<sequence length="901" mass="101971">MLIKLLTKVFGSRNDRTLRRMRKAVNVINAMEPEMEKLSDDELKAKTAEFRARLEKGETVESLIPEAFAVVREASKRVFGMRHFDVQLLGGMVLNDRCIAEMRTGEGKTLTATLPAYLNALSGKGVHVVTVNDYLAQRDAENNRPLFEFLGMTVGINLPGMPAPAKRAAYAADITYGTNNEFGFDYLRDNMAFSPEERVQRKLHYALVDEVDSILIDEARTPLIISGPAEDSSEMYKKVNKIIPHLIRQEKEDSDTFQGEGHFSVDEKSRQVNLTERGLVLIEELLVKEGIMDEGESLYSPANIMLMHHVTAALRAHALFTRDVDYIVKDGEVIIVDEHTGRTMQGRRWSDGLHQAVEAKEGVEIQNENQTLASITFQNYFRLYEKLAGMTGTADTEAFEFRSIYRLDTVVVPTNRPMIRKDMPDLVYMSEAEKIQAIIEDIKECTARNQPVLVGTISIEKSELVSNELTKAGIKHNVLNAKFHANEAAIVAQAGYPGAVTIATNMAGRGTDIVLGGSWQAEVAALENPTPEQIEEIKAAWQVRHDQVLAAGGLHIIGTERHESRRIDNQLRGRSGRQGDAGSSRFYLSMEDALMRIFASDRVSGMMRKLGMKPGEAIEHPWVTKAIANAQRKVESRNFDIRKQLLEYDDVANDQRRAIYAQRNELLDVSDVSETINSIREDVFKVTIDAYIPPQSLEEMWDIPGLQERLKNDFDLDMPIAEWLDKEPELHEETLRERILTHAIEVYKRKEEIVGAEMMRHFEKGVMLQTLDSLWKEHLAAMDYLRQGIHLRGYAQKDPKQEYKRESFSMFAAMLESLKYEVVSTLSKVQVRMPEEVEELEQQRRMEAERLAQMQQLSHQDDDTAAAAALAAQTGDRKVGRNDPCPCGSGKKYKQCHGRLQ</sequence>
<organism>
    <name type="scientific">Escherichia fergusonii (strain ATCC 35469 / DSM 13698 / CCUG 18766 / IAM 14443 / JCM 21226 / LMG 7866 / NBRC 102419 / NCTC 12128 / CDC 0568-73)</name>
    <dbReference type="NCBI Taxonomy" id="585054"/>
    <lineage>
        <taxon>Bacteria</taxon>
        <taxon>Pseudomonadati</taxon>
        <taxon>Pseudomonadota</taxon>
        <taxon>Gammaproteobacteria</taxon>
        <taxon>Enterobacterales</taxon>
        <taxon>Enterobacteriaceae</taxon>
        <taxon>Escherichia</taxon>
    </lineage>
</organism>
<keyword id="KW-0067">ATP-binding</keyword>
<keyword id="KW-0997">Cell inner membrane</keyword>
<keyword id="KW-1003">Cell membrane</keyword>
<keyword id="KW-0963">Cytoplasm</keyword>
<keyword id="KW-0472">Membrane</keyword>
<keyword id="KW-0479">Metal-binding</keyword>
<keyword id="KW-0547">Nucleotide-binding</keyword>
<keyword id="KW-0653">Protein transport</keyword>
<keyword id="KW-1278">Translocase</keyword>
<keyword id="KW-0811">Translocation</keyword>
<keyword id="KW-0813">Transport</keyword>
<keyword id="KW-0862">Zinc</keyword>
<feature type="chain" id="PRO_1000145014" description="Protein translocase subunit SecA">
    <location>
        <begin position="1"/>
        <end position="901"/>
    </location>
</feature>
<feature type="region of interest" description="Disordered" evidence="2">
    <location>
        <begin position="858"/>
        <end position="891"/>
    </location>
</feature>
<feature type="binding site" evidence="1">
    <location>
        <position position="87"/>
    </location>
    <ligand>
        <name>ATP</name>
        <dbReference type="ChEBI" id="CHEBI:30616"/>
    </ligand>
</feature>
<feature type="binding site" evidence="1">
    <location>
        <begin position="105"/>
        <end position="109"/>
    </location>
    <ligand>
        <name>ATP</name>
        <dbReference type="ChEBI" id="CHEBI:30616"/>
    </ligand>
</feature>
<feature type="binding site" evidence="1">
    <location>
        <position position="512"/>
    </location>
    <ligand>
        <name>ATP</name>
        <dbReference type="ChEBI" id="CHEBI:30616"/>
    </ligand>
</feature>
<feature type="binding site" evidence="1">
    <location>
        <position position="885"/>
    </location>
    <ligand>
        <name>Zn(2+)</name>
        <dbReference type="ChEBI" id="CHEBI:29105"/>
    </ligand>
</feature>
<feature type="binding site" evidence="1">
    <location>
        <position position="887"/>
    </location>
    <ligand>
        <name>Zn(2+)</name>
        <dbReference type="ChEBI" id="CHEBI:29105"/>
    </ligand>
</feature>
<feature type="binding site" evidence="1">
    <location>
        <position position="896"/>
    </location>
    <ligand>
        <name>Zn(2+)</name>
        <dbReference type="ChEBI" id="CHEBI:29105"/>
    </ligand>
</feature>
<feature type="binding site" evidence="1">
    <location>
        <position position="897"/>
    </location>
    <ligand>
        <name>Zn(2+)</name>
        <dbReference type="ChEBI" id="CHEBI:29105"/>
    </ligand>
</feature>
<accession>B7LWG4</accession>
<name>SECA_ESCF3</name>
<evidence type="ECO:0000255" key="1">
    <source>
        <dbReference type="HAMAP-Rule" id="MF_01382"/>
    </source>
</evidence>
<evidence type="ECO:0000256" key="2">
    <source>
        <dbReference type="SAM" id="MobiDB-lite"/>
    </source>
</evidence>
<reference key="1">
    <citation type="journal article" date="2009" name="PLoS Genet.">
        <title>Organised genome dynamics in the Escherichia coli species results in highly diverse adaptive paths.</title>
        <authorList>
            <person name="Touchon M."/>
            <person name="Hoede C."/>
            <person name="Tenaillon O."/>
            <person name="Barbe V."/>
            <person name="Baeriswyl S."/>
            <person name="Bidet P."/>
            <person name="Bingen E."/>
            <person name="Bonacorsi S."/>
            <person name="Bouchier C."/>
            <person name="Bouvet O."/>
            <person name="Calteau A."/>
            <person name="Chiapello H."/>
            <person name="Clermont O."/>
            <person name="Cruveiller S."/>
            <person name="Danchin A."/>
            <person name="Diard M."/>
            <person name="Dossat C."/>
            <person name="Karoui M.E."/>
            <person name="Frapy E."/>
            <person name="Garry L."/>
            <person name="Ghigo J.M."/>
            <person name="Gilles A.M."/>
            <person name="Johnson J."/>
            <person name="Le Bouguenec C."/>
            <person name="Lescat M."/>
            <person name="Mangenot S."/>
            <person name="Martinez-Jehanne V."/>
            <person name="Matic I."/>
            <person name="Nassif X."/>
            <person name="Oztas S."/>
            <person name="Petit M.A."/>
            <person name="Pichon C."/>
            <person name="Rouy Z."/>
            <person name="Ruf C.S."/>
            <person name="Schneider D."/>
            <person name="Tourret J."/>
            <person name="Vacherie B."/>
            <person name="Vallenet D."/>
            <person name="Medigue C."/>
            <person name="Rocha E.P.C."/>
            <person name="Denamur E."/>
        </authorList>
    </citation>
    <scope>NUCLEOTIDE SEQUENCE [LARGE SCALE GENOMIC DNA]</scope>
    <source>
        <strain>ATCC 35469 / DSM 13698 / BCRC 15582 / CCUG 18766 / IAM 14443 / JCM 21226 / LMG 7866 / NBRC 102419 / NCTC 12128 / CDC 0568-73</strain>
    </source>
</reference>
<proteinExistence type="inferred from homology"/>
<comment type="function">
    <text evidence="1">Part of the Sec protein translocase complex. Interacts with the SecYEG preprotein conducting channel. Has a central role in coupling the hydrolysis of ATP to the transfer of proteins into and across the cell membrane, serving both as a receptor for the preprotein-SecB complex and as an ATP-driven molecular motor driving the stepwise translocation of polypeptide chains across the membrane.</text>
</comment>
<comment type="catalytic activity">
    <reaction evidence="1">
        <text>ATP + H2O + cellular proteinSide 1 = ADP + phosphate + cellular proteinSide 2.</text>
        <dbReference type="EC" id="7.4.2.8"/>
    </reaction>
</comment>
<comment type="cofactor">
    <cofactor evidence="1">
        <name>Zn(2+)</name>
        <dbReference type="ChEBI" id="CHEBI:29105"/>
    </cofactor>
    <text evidence="1">May bind 1 zinc ion per subunit.</text>
</comment>
<comment type="subunit">
    <text evidence="1">Monomer and homodimer. Part of the essential Sec protein translocation apparatus which comprises SecA, SecYEG and auxiliary proteins SecDF-YajC and YidC.</text>
</comment>
<comment type="subcellular location">
    <subcellularLocation>
        <location evidence="1">Cell inner membrane</location>
        <topology evidence="1">Peripheral membrane protein</topology>
        <orientation evidence="1">Cytoplasmic side</orientation>
    </subcellularLocation>
    <subcellularLocation>
        <location evidence="1">Cytoplasm</location>
    </subcellularLocation>
    <text evidence="1">Distribution is 50-50.</text>
</comment>
<comment type="induction">
    <text evidence="1">Repressed under conditions of excess protein secretion capacity and derepressed when protein secretion becomes limiting. This is regulated by SecM.</text>
</comment>
<comment type="similarity">
    <text evidence="1">Belongs to the SecA family.</text>
</comment>